<feature type="chain" id="PRO_1000083157" description="Probable transcriptional regulatory protein Fphi_1565">
    <location>
        <begin position="1"/>
        <end position="248"/>
    </location>
</feature>
<name>Y1570_FRAP2</name>
<accession>B0TZD8</accession>
<dbReference type="EMBL" id="CP000937">
    <property type="protein sequence ID" value="ABZ87791.1"/>
    <property type="molecule type" value="Genomic_DNA"/>
</dbReference>
<dbReference type="SMR" id="B0TZD8"/>
<dbReference type="KEGG" id="fph:Fphi_1565"/>
<dbReference type="eggNOG" id="COG0217">
    <property type="taxonomic scope" value="Bacteria"/>
</dbReference>
<dbReference type="HOGENOM" id="CLU_062974_2_2_6"/>
<dbReference type="GO" id="GO:0005829">
    <property type="term" value="C:cytosol"/>
    <property type="evidence" value="ECO:0007669"/>
    <property type="project" value="TreeGrafter"/>
</dbReference>
<dbReference type="GO" id="GO:0003677">
    <property type="term" value="F:DNA binding"/>
    <property type="evidence" value="ECO:0007669"/>
    <property type="project" value="UniProtKB-UniRule"/>
</dbReference>
<dbReference type="GO" id="GO:0006355">
    <property type="term" value="P:regulation of DNA-templated transcription"/>
    <property type="evidence" value="ECO:0007669"/>
    <property type="project" value="UniProtKB-UniRule"/>
</dbReference>
<dbReference type="FunFam" id="1.10.10.200:FF:000001">
    <property type="entry name" value="Probable transcriptional regulatory protein YebC"/>
    <property type="match status" value="1"/>
</dbReference>
<dbReference type="FunFam" id="3.30.70.980:FF:000002">
    <property type="entry name" value="Probable transcriptional regulatory protein YebC"/>
    <property type="match status" value="1"/>
</dbReference>
<dbReference type="Gene3D" id="1.10.10.200">
    <property type="match status" value="1"/>
</dbReference>
<dbReference type="Gene3D" id="3.30.70.980">
    <property type="match status" value="2"/>
</dbReference>
<dbReference type="HAMAP" id="MF_00693">
    <property type="entry name" value="Transcrip_reg_TACO1"/>
    <property type="match status" value="1"/>
</dbReference>
<dbReference type="InterPro" id="IPR017856">
    <property type="entry name" value="Integrase-like_N"/>
</dbReference>
<dbReference type="InterPro" id="IPR048300">
    <property type="entry name" value="TACO1_YebC-like_2nd/3rd_dom"/>
</dbReference>
<dbReference type="InterPro" id="IPR049083">
    <property type="entry name" value="TACO1_YebC_N"/>
</dbReference>
<dbReference type="InterPro" id="IPR002876">
    <property type="entry name" value="Transcrip_reg_TACO1-like"/>
</dbReference>
<dbReference type="InterPro" id="IPR026564">
    <property type="entry name" value="Transcrip_reg_TACO1-like_dom3"/>
</dbReference>
<dbReference type="InterPro" id="IPR029072">
    <property type="entry name" value="YebC-like"/>
</dbReference>
<dbReference type="NCBIfam" id="NF001030">
    <property type="entry name" value="PRK00110.1"/>
    <property type="match status" value="1"/>
</dbReference>
<dbReference type="NCBIfam" id="NF009044">
    <property type="entry name" value="PRK12378.1"/>
    <property type="match status" value="1"/>
</dbReference>
<dbReference type="NCBIfam" id="TIGR01033">
    <property type="entry name" value="YebC/PmpR family DNA-binding transcriptional regulator"/>
    <property type="match status" value="1"/>
</dbReference>
<dbReference type="PANTHER" id="PTHR12532:SF6">
    <property type="entry name" value="TRANSCRIPTIONAL REGULATORY PROTEIN YEBC-RELATED"/>
    <property type="match status" value="1"/>
</dbReference>
<dbReference type="PANTHER" id="PTHR12532">
    <property type="entry name" value="TRANSLATIONAL ACTIVATOR OF CYTOCHROME C OXIDASE 1"/>
    <property type="match status" value="1"/>
</dbReference>
<dbReference type="Pfam" id="PF20772">
    <property type="entry name" value="TACO1_YebC_N"/>
    <property type="match status" value="1"/>
</dbReference>
<dbReference type="Pfam" id="PF01709">
    <property type="entry name" value="Transcrip_reg"/>
    <property type="match status" value="1"/>
</dbReference>
<dbReference type="SUPFAM" id="SSF75625">
    <property type="entry name" value="YebC-like"/>
    <property type="match status" value="1"/>
</dbReference>
<keyword id="KW-0963">Cytoplasm</keyword>
<keyword id="KW-0238">DNA-binding</keyword>
<keyword id="KW-0804">Transcription</keyword>
<keyword id="KW-0805">Transcription regulation</keyword>
<sequence length="248" mass="26843">MAGHSKWANIKHKKAKEDAKRGKIFTKLIREITVAARLGGGDKDANPRLRAAIATAFANNMSKDTVERAILKGAGGDDSANVEEVRYEGYGPGGVAIIVDCMTDNRNRTVGEVRHAFTKSGGNLGTDGSVAYMFTKKGIISFAPGVDEDALMEVALEAGAEDIITHEDGSIDVFTTPHDFSDVQEALIAKGFNSDNAEVTFDAETKAELDIEIAEKVMNLIDRLEDLDDVQNVYSNVNFTQELMEQLG</sequence>
<organism>
    <name type="scientific">Francisella philomiragia subsp. philomiragia (strain ATCC 25017 / CCUG 19701 / FSC 153 / O#319-036)</name>
    <dbReference type="NCBI Taxonomy" id="484022"/>
    <lineage>
        <taxon>Bacteria</taxon>
        <taxon>Pseudomonadati</taxon>
        <taxon>Pseudomonadota</taxon>
        <taxon>Gammaproteobacteria</taxon>
        <taxon>Thiotrichales</taxon>
        <taxon>Francisellaceae</taxon>
        <taxon>Francisella</taxon>
    </lineage>
</organism>
<reference key="1">
    <citation type="submission" date="2007-12" db="EMBL/GenBank/DDBJ databases">
        <title>Complete sequence of chromosome of Francisella philomiragia subsp. philomiragia ATCC 25017.</title>
        <authorList>
            <consortium name="US DOE Joint Genome Institute"/>
            <person name="Copeland A."/>
            <person name="Lucas S."/>
            <person name="Lapidus A."/>
            <person name="Barry K."/>
            <person name="Detter J.C."/>
            <person name="Glavina del Rio T."/>
            <person name="Hammon N."/>
            <person name="Israni S."/>
            <person name="Dalin E."/>
            <person name="Tice H."/>
            <person name="Pitluck S."/>
            <person name="Chain P."/>
            <person name="Malfatti S."/>
            <person name="Shin M."/>
            <person name="Vergez L."/>
            <person name="Schmutz J."/>
            <person name="Larimer F."/>
            <person name="Land M."/>
            <person name="Hauser L."/>
            <person name="Richardson P."/>
        </authorList>
    </citation>
    <scope>NUCLEOTIDE SEQUENCE [LARGE SCALE GENOMIC DNA]</scope>
    <source>
        <strain>ATCC 25017 / CCUG 19701 / FSC 153 / O#319-036</strain>
    </source>
</reference>
<evidence type="ECO:0000255" key="1">
    <source>
        <dbReference type="HAMAP-Rule" id="MF_00693"/>
    </source>
</evidence>
<proteinExistence type="inferred from homology"/>
<gene>
    <name type="ordered locus">Fphi_1565</name>
</gene>
<comment type="subcellular location">
    <subcellularLocation>
        <location evidence="1">Cytoplasm</location>
    </subcellularLocation>
</comment>
<comment type="similarity">
    <text evidence="1">Belongs to the TACO1 family.</text>
</comment>
<protein>
    <recommendedName>
        <fullName evidence="1">Probable transcriptional regulatory protein Fphi_1565</fullName>
    </recommendedName>
</protein>